<protein>
    <recommendedName>
        <fullName>Peptide methionine sulfoxide reductase B9</fullName>
        <shortName>AtMSRB9</shortName>
        <ecNumber>1.8.4.12</ecNumber>
    </recommendedName>
    <alternativeName>
        <fullName>Peptide-methionine (R)-S-oxide reductase</fullName>
    </alternativeName>
</protein>
<gene>
    <name type="primary">MSRB9</name>
    <name type="ordered locus">At4g21850</name>
    <name type="ORF">T8O5.60</name>
</gene>
<dbReference type="EC" id="1.8.4.12"/>
<dbReference type="EMBL" id="AL021890">
    <property type="protein sequence ID" value="CAA17152.1"/>
    <property type="status" value="ALT_SEQ"/>
    <property type="molecule type" value="Genomic_DNA"/>
</dbReference>
<dbReference type="EMBL" id="AL161556">
    <property type="protein sequence ID" value="CAB79140.1"/>
    <property type="status" value="ALT_SEQ"/>
    <property type="molecule type" value="Genomic_DNA"/>
</dbReference>
<dbReference type="EMBL" id="CP002687">
    <property type="protein sequence ID" value="AEE84511.1"/>
    <property type="molecule type" value="Genomic_DNA"/>
</dbReference>
<dbReference type="EMBL" id="CP002687">
    <property type="protein sequence ID" value="AEE84512.1"/>
    <property type="molecule type" value="Genomic_DNA"/>
</dbReference>
<dbReference type="EMBL" id="BT004230">
    <property type="protein sequence ID" value="AAO42245.1"/>
    <property type="molecule type" value="mRNA"/>
</dbReference>
<dbReference type="EMBL" id="BT005691">
    <property type="protein sequence ID" value="AAO64111.1"/>
    <property type="molecule type" value="mRNA"/>
</dbReference>
<dbReference type="EMBL" id="AY086368">
    <property type="protein sequence ID" value="AAM64435.1"/>
    <property type="molecule type" value="mRNA"/>
</dbReference>
<dbReference type="PIR" id="T05467">
    <property type="entry name" value="T05467"/>
</dbReference>
<dbReference type="RefSeq" id="NP_567638.1">
    <molecule id="Q84JT6-1"/>
    <property type="nucleotide sequence ID" value="NM_118305.3"/>
</dbReference>
<dbReference type="RefSeq" id="NP_849418.1">
    <molecule id="Q84JT6-2"/>
    <property type="nucleotide sequence ID" value="NM_179087.1"/>
</dbReference>
<dbReference type="SMR" id="Q84JT6"/>
<dbReference type="FunCoup" id="Q84JT6">
    <property type="interactions" value="28"/>
</dbReference>
<dbReference type="STRING" id="3702.Q84JT6"/>
<dbReference type="PaxDb" id="3702-AT4G21850.1"/>
<dbReference type="ProteomicsDB" id="239014">
    <molecule id="Q84JT6-1"/>
</dbReference>
<dbReference type="EnsemblPlants" id="AT4G21850.1">
    <molecule id="Q84JT6-1"/>
    <property type="protein sequence ID" value="AT4G21850.1"/>
    <property type="gene ID" value="AT4G21850"/>
</dbReference>
<dbReference type="EnsemblPlants" id="AT4G21850.2">
    <molecule id="Q84JT6-2"/>
    <property type="protein sequence ID" value="AT4G21850.2"/>
    <property type="gene ID" value="AT4G21850"/>
</dbReference>
<dbReference type="GeneID" id="828273"/>
<dbReference type="Gramene" id="AT4G21850.1">
    <molecule id="Q84JT6-1"/>
    <property type="protein sequence ID" value="AT4G21850.1"/>
    <property type="gene ID" value="AT4G21850"/>
</dbReference>
<dbReference type="Gramene" id="AT4G21850.2">
    <molecule id="Q84JT6-2"/>
    <property type="protein sequence ID" value="AT4G21850.2"/>
    <property type="gene ID" value="AT4G21850"/>
</dbReference>
<dbReference type="KEGG" id="ath:AT4G21850"/>
<dbReference type="Araport" id="AT4G21850"/>
<dbReference type="TAIR" id="AT4G21850">
    <property type="gene designation" value="MSRB9"/>
</dbReference>
<dbReference type="eggNOG" id="KOG0856">
    <property type="taxonomic scope" value="Eukaryota"/>
</dbReference>
<dbReference type="HOGENOM" id="CLU_031040_8_1_1"/>
<dbReference type="InParanoid" id="Q84JT6"/>
<dbReference type="OMA" id="CKHCENQ"/>
<dbReference type="OrthoDB" id="44061at2759"/>
<dbReference type="PhylomeDB" id="Q84JT6"/>
<dbReference type="PRO" id="PR:Q84JT6"/>
<dbReference type="Proteomes" id="UP000006548">
    <property type="component" value="Chromosome 4"/>
</dbReference>
<dbReference type="ExpressionAtlas" id="Q84JT6">
    <property type="expression patterns" value="baseline and differential"/>
</dbReference>
<dbReference type="GO" id="GO:0005829">
    <property type="term" value="C:cytosol"/>
    <property type="evidence" value="ECO:0007005"/>
    <property type="project" value="TAIR"/>
</dbReference>
<dbReference type="GO" id="GO:0046872">
    <property type="term" value="F:metal ion binding"/>
    <property type="evidence" value="ECO:0007669"/>
    <property type="project" value="UniProtKB-KW"/>
</dbReference>
<dbReference type="GO" id="GO:0033743">
    <property type="term" value="F:peptide-methionine (R)-S-oxide reductase activity"/>
    <property type="evidence" value="ECO:0007669"/>
    <property type="project" value="UniProtKB-EC"/>
</dbReference>
<dbReference type="GO" id="GO:0030091">
    <property type="term" value="P:protein repair"/>
    <property type="evidence" value="ECO:0007669"/>
    <property type="project" value="InterPro"/>
</dbReference>
<dbReference type="GO" id="GO:0006979">
    <property type="term" value="P:response to oxidative stress"/>
    <property type="evidence" value="ECO:0007669"/>
    <property type="project" value="InterPro"/>
</dbReference>
<dbReference type="FunFam" id="2.170.150.20:FF:000009">
    <property type="entry name" value="Peptide-methionine (R)-S-oxide reductase"/>
    <property type="match status" value="1"/>
</dbReference>
<dbReference type="Gene3D" id="2.170.150.20">
    <property type="entry name" value="Peptide methionine sulfoxide reductase"/>
    <property type="match status" value="1"/>
</dbReference>
<dbReference type="InterPro" id="IPR028427">
    <property type="entry name" value="Met_Sox_Rdtase_MsrB"/>
</dbReference>
<dbReference type="InterPro" id="IPR002579">
    <property type="entry name" value="Met_Sox_Rdtase_MsrB_dom"/>
</dbReference>
<dbReference type="InterPro" id="IPR011057">
    <property type="entry name" value="Mss4-like_sf"/>
</dbReference>
<dbReference type="NCBIfam" id="TIGR00357">
    <property type="entry name" value="peptide-methionine (R)-S-oxide reductase MsrB"/>
    <property type="match status" value="1"/>
</dbReference>
<dbReference type="PANTHER" id="PTHR46081">
    <property type="entry name" value="PEPTIDE METHIONINE SULFOXIDE REDUCTASE 2"/>
    <property type="match status" value="1"/>
</dbReference>
<dbReference type="PANTHER" id="PTHR46081:SF3">
    <property type="entry name" value="PEPTIDE METHIONINE SULFOXIDE REDUCTASE B7-RELATED"/>
    <property type="match status" value="1"/>
</dbReference>
<dbReference type="Pfam" id="PF01641">
    <property type="entry name" value="SelR"/>
    <property type="match status" value="1"/>
</dbReference>
<dbReference type="SUPFAM" id="SSF51316">
    <property type="entry name" value="Mss4-like"/>
    <property type="match status" value="1"/>
</dbReference>
<dbReference type="PROSITE" id="PS51790">
    <property type="entry name" value="MSRB"/>
    <property type="match status" value="1"/>
</dbReference>
<organism>
    <name type="scientific">Arabidopsis thaliana</name>
    <name type="common">Mouse-ear cress</name>
    <dbReference type="NCBI Taxonomy" id="3702"/>
    <lineage>
        <taxon>Eukaryota</taxon>
        <taxon>Viridiplantae</taxon>
        <taxon>Streptophyta</taxon>
        <taxon>Embryophyta</taxon>
        <taxon>Tracheophyta</taxon>
        <taxon>Spermatophyta</taxon>
        <taxon>Magnoliopsida</taxon>
        <taxon>eudicotyledons</taxon>
        <taxon>Gunneridae</taxon>
        <taxon>Pentapetalae</taxon>
        <taxon>rosids</taxon>
        <taxon>malvids</taxon>
        <taxon>Brassicales</taxon>
        <taxon>Brassicaceae</taxon>
        <taxon>Camelineae</taxon>
        <taxon>Arabidopsis</taxon>
    </lineage>
</organism>
<sequence>MPTSATAVAPSTGSVQKKDQDWRAILSPEQFRVLREKGTENRGKGEYTKLFDDGIYSCAGCATPLYKSTTKFDSGCGWPSFFDAIPGAIKQTPEAGGRRMEITCAACDGHLGHVVKGEGFPTATDERHCVNSVSLKFSEISSQ</sequence>
<evidence type="ECO:0000250" key="1"/>
<evidence type="ECO:0000255" key="2">
    <source>
        <dbReference type="PROSITE-ProRule" id="PRU01126"/>
    </source>
</evidence>
<evidence type="ECO:0000305" key="3"/>
<proteinExistence type="evidence at transcript level"/>
<comment type="function">
    <text evidence="1">Catalyzes the reduction of methionine sulfoxide (MetSO) to methionine in proteins. Plays a protective role against oxidative stress by restoring activity to proteins that have been inactivated by methionine oxidation. MSRB family specifically reduces the MetSO R-enantiomer (By similarity).</text>
</comment>
<comment type="catalytic activity">
    <reaction>
        <text>L-methionyl-[protein] + [thioredoxin]-disulfide + H2O = L-methionyl-(R)-S-oxide-[protein] + [thioredoxin]-dithiol</text>
        <dbReference type="Rhea" id="RHEA:24164"/>
        <dbReference type="Rhea" id="RHEA-COMP:10698"/>
        <dbReference type="Rhea" id="RHEA-COMP:10700"/>
        <dbReference type="Rhea" id="RHEA-COMP:12313"/>
        <dbReference type="Rhea" id="RHEA-COMP:12314"/>
        <dbReference type="ChEBI" id="CHEBI:15377"/>
        <dbReference type="ChEBI" id="CHEBI:16044"/>
        <dbReference type="ChEBI" id="CHEBI:29950"/>
        <dbReference type="ChEBI" id="CHEBI:45764"/>
        <dbReference type="ChEBI" id="CHEBI:50058"/>
        <dbReference type="EC" id="1.8.4.12"/>
    </reaction>
</comment>
<comment type="cofactor">
    <cofactor evidence="1">
        <name>Zn(2+)</name>
        <dbReference type="ChEBI" id="CHEBI:29105"/>
    </cofactor>
    <text evidence="1">Binds 1 zinc ion per subunit.</text>
</comment>
<comment type="subcellular location">
    <subcellularLocation>
        <location evidence="3">Cytoplasm</location>
        <location evidence="3">Cytosol</location>
    </subcellularLocation>
</comment>
<comment type="alternative products">
    <event type="alternative splicing"/>
    <isoform>
        <id>Q84JT6-1</id>
        <name>1</name>
        <sequence type="displayed"/>
    </isoform>
    <isoform>
        <id>Q84JT6-2</id>
        <name>2</name>
        <sequence type="described" ref="VSP_039513 VSP_039514"/>
    </isoform>
</comment>
<comment type="similarity">
    <text evidence="3">Belongs to the MsrB Met sulfoxide reductase family.</text>
</comment>
<comment type="sequence caution" evidence="3">
    <conflict type="erroneous gene model prediction">
        <sequence resource="EMBL-CDS" id="CAA17152"/>
    </conflict>
</comment>
<comment type="sequence caution" evidence="3">
    <conflict type="erroneous gene model prediction">
        <sequence resource="EMBL-CDS" id="CAB79140"/>
    </conflict>
</comment>
<accession>Q84JT6</accession>
<accession>O49708</accession>
<accession>Q8LCW5</accession>
<feature type="chain" id="PRO_0000395527" description="Peptide methionine sulfoxide reductase B9">
    <location>
        <begin position="1"/>
        <end position="143"/>
    </location>
</feature>
<feature type="domain" description="MsrB" evidence="2">
    <location>
        <begin position="19"/>
        <end position="140"/>
    </location>
</feature>
<feature type="active site" description="Nucleophile" evidence="2">
    <location>
        <position position="129"/>
    </location>
</feature>
<feature type="binding site" evidence="2">
    <location>
        <position position="58"/>
    </location>
    <ligand>
        <name>Zn(2+)</name>
        <dbReference type="ChEBI" id="CHEBI:29105"/>
    </ligand>
</feature>
<feature type="binding site" evidence="2">
    <location>
        <position position="61"/>
    </location>
    <ligand>
        <name>Zn(2+)</name>
        <dbReference type="ChEBI" id="CHEBI:29105"/>
    </ligand>
</feature>
<feature type="binding site" evidence="2">
    <location>
        <position position="104"/>
    </location>
    <ligand>
        <name>Zn(2+)</name>
        <dbReference type="ChEBI" id="CHEBI:29105"/>
    </ligand>
</feature>
<feature type="binding site" evidence="2">
    <location>
        <position position="107"/>
    </location>
    <ligand>
        <name>Zn(2+)</name>
        <dbReference type="ChEBI" id="CHEBI:29105"/>
    </ligand>
</feature>
<feature type="disulfide bond" description="Redox-active" evidence="1">
    <location>
        <begin position="76"/>
        <end position="129"/>
    </location>
</feature>
<feature type="splice variant" id="VSP_039513" description="In isoform 2." evidence="3">
    <original>PEAGGRRMEITCAACDGHLGHVVKGEGFP</original>
    <variation>VIDIFFFFSFMTHNYFSDKDCCIKQVLCL</variation>
    <location>
        <begin position="93"/>
        <end position="121"/>
    </location>
</feature>
<feature type="splice variant" id="VSP_039514" description="In isoform 2." evidence="3">
    <location>
        <begin position="122"/>
        <end position="143"/>
    </location>
</feature>
<feature type="sequence conflict" description="In Ref. 4; AAM64435." evidence="3" ref="4">
    <original>T</original>
    <variation>R</variation>
    <location>
        <position position="6"/>
    </location>
</feature>
<name>MSRB9_ARATH</name>
<keyword id="KW-0025">Alternative splicing</keyword>
<keyword id="KW-0963">Cytoplasm</keyword>
<keyword id="KW-1015">Disulfide bond</keyword>
<keyword id="KW-0249">Electron transport</keyword>
<keyword id="KW-0479">Metal-binding</keyword>
<keyword id="KW-0560">Oxidoreductase</keyword>
<keyword id="KW-0676">Redox-active center</keyword>
<keyword id="KW-1185">Reference proteome</keyword>
<keyword id="KW-0813">Transport</keyword>
<keyword id="KW-0862">Zinc</keyword>
<reference key="1">
    <citation type="journal article" date="1999" name="Nature">
        <title>Sequence and analysis of chromosome 4 of the plant Arabidopsis thaliana.</title>
        <authorList>
            <person name="Mayer K.F.X."/>
            <person name="Schueller C."/>
            <person name="Wambutt R."/>
            <person name="Murphy G."/>
            <person name="Volckaert G."/>
            <person name="Pohl T."/>
            <person name="Duesterhoeft A."/>
            <person name="Stiekema W."/>
            <person name="Entian K.-D."/>
            <person name="Terryn N."/>
            <person name="Harris B."/>
            <person name="Ansorge W."/>
            <person name="Brandt P."/>
            <person name="Grivell L.A."/>
            <person name="Rieger M."/>
            <person name="Weichselgartner M."/>
            <person name="de Simone V."/>
            <person name="Obermaier B."/>
            <person name="Mache R."/>
            <person name="Mueller M."/>
            <person name="Kreis M."/>
            <person name="Delseny M."/>
            <person name="Puigdomenech P."/>
            <person name="Watson M."/>
            <person name="Schmidtheini T."/>
            <person name="Reichert B."/>
            <person name="Portetelle D."/>
            <person name="Perez-Alonso M."/>
            <person name="Boutry M."/>
            <person name="Bancroft I."/>
            <person name="Vos P."/>
            <person name="Hoheisel J."/>
            <person name="Zimmermann W."/>
            <person name="Wedler H."/>
            <person name="Ridley P."/>
            <person name="Langham S.-A."/>
            <person name="McCullagh B."/>
            <person name="Bilham L."/>
            <person name="Robben J."/>
            <person name="van der Schueren J."/>
            <person name="Grymonprez B."/>
            <person name="Chuang Y.-J."/>
            <person name="Vandenbussche F."/>
            <person name="Braeken M."/>
            <person name="Weltjens I."/>
            <person name="Voet M."/>
            <person name="Bastiaens I."/>
            <person name="Aert R."/>
            <person name="Defoor E."/>
            <person name="Weitzenegger T."/>
            <person name="Bothe G."/>
            <person name="Ramsperger U."/>
            <person name="Hilbert H."/>
            <person name="Braun M."/>
            <person name="Holzer E."/>
            <person name="Brandt A."/>
            <person name="Peters S."/>
            <person name="van Staveren M."/>
            <person name="Dirkse W."/>
            <person name="Mooijman P."/>
            <person name="Klein Lankhorst R."/>
            <person name="Rose M."/>
            <person name="Hauf J."/>
            <person name="Koetter P."/>
            <person name="Berneiser S."/>
            <person name="Hempel S."/>
            <person name="Feldpausch M."/>
            <person name="Lamberth S."/>
            <person name="Van den Daele H."/>
            <person name="De Keyser A."/>
            <person name="Buysshaert C."/>
            <person name="Gielen J."/>
            <person name="Villarroel R."/>
            <person name="De Clercq R."/>
            <person name="van Montagu M."/>
            <person name="Rogers J."/>
            <person name="Cronin A."/>
            <person name="Quail M.A."/>
            <person name="Bray-Allen S."/>
            <person name="Clark L."/>
            <person name="Doggett J."/>
            <person name="Hall S."/>
            <person name="Kay M."/>
            <person name="Lennard N."/>
            <person name="McLay K."/>
            <person name="Mayes R."/>
            <person name="Pettett A."/>
            <person name="Rajandream M.A."/>
            <person name="Lyne M."/>
            <person name="Benes V."/>
            <person name="Rechmann S."/>
            <person name="Borkova D."/>
            <person name="Bloecker H."/>
            <person name="Scharfe M."/>
            <person name="Grimm M."/>
            <person name="Loehnert T.-H."/>
            <person name="Dose S."/>
            <person name="de Haan M."/>
            <person name="Maarse A.C."/>
            <person name="Schaefer M."/>
            <person name="Mueller-Auer S."/>
            <person name="Gabel C."/>
            <person name="Fuchs M."/>
            <person name="Fartmann B."/>
            <person name="Granderath K."/>
            <person name="Dauner D."/>
            <person name="Herzl A."/>
            <person name="Neumann S."/>
            <person name="Argiriou A."/>
            <person name="Vitale D."/>
            <person name="Liguori R."/>
            <person name="Piravandi E."/>
            <person name="Massenet O."/>
            <person name="Quigley F."/>
            <person name="Clabauld G."/>
            <person name="Muendlein A."/>
            <person name="Felber R."/>
            <person name="Schnabl S."/>
            <person name="Hiller R."/>
            <person name="Schmidt W."/>
            <person name="Lecharny A."/>
            <person name="Aubourg S."/>
            <person name="Chefdor F."/>
            <person name="Cooke R."/>
            <person name="Berger C."/>
            <person name="Monfort A."/>
            <person name="Casacuberta E."/>
            <person name="Gibbons T."/>
            <person name="Weber N."/>
            <person name="Vandenbol M."/>
            <person name="Bargues M."/>
            <person name="Terol J."/>
            <person name="Torres A."/>
            <person name="Perez-Perez A."/>
            <person name="Purnelle B."/>
            <person name="Bent E."/>
            <person name="Johnson S."/>
            <person name="Tacon D."/>
            <person name="Jesse T."/>
            <person name="Heijnen L."/>
            <person name="Schwarz S."/>
            <person name="Scholler P."/>
            <person name="Heber S."/>
            <person name="Francs P."/>
            <person name="Bielke C."/>
            <person name="Frishman D."/>
            <person name="Haase D."/>
            <person name="Lemcke K."/>
            <person name="Mewes H.-W."/>
            <person name="Stocker S."/>
            <person name="Zaccaria P."/>
            <person name="Bevan M."/>
            <person name="Wilson R.K."/>
            <person name="de la Bastide M."/>
            <person name="Habermann K."/>
            <person name="Parnell L."/>
            <person name="Dedhia N."/>
            <person name="Gnoj L."/>
            <person name="Schutz K."/>
            <person name="Huang E."/>
            <person name="Spiegel L."/>
            <person name="Sekhon M."/>
            <person name="Murray J."/>
            <person name="Sheet P."/>
            <person name="Cordes M."/>
            <person name="Abu-Threideh J."/>
            <person name="Stoneking T."/>
            <person name="Kalicki J."/>
            <person name="Graves T."/>
            <person name="Harmon G."/>
            <person name="Edwards J."/>
            <person name="Latreille P."/>
            <person name="Courtney L."/>
            <person name="Cloud J."/>
            <person name="Abbott A."/>
            <person name="Scott K."/>
            <person name="Johnson D."/>
            <person name="Minx P."/>
            <person name="Bentley D."/>
            <person name="Fulton B."/>
            <person name="Miller N."/>
            <person name="Greco T."/>
            <person name="Kemp K."/>
            <person name="Kramer J."/>
            <person name="Fulton L."/>
            <person name="Mardis E."/>
            <person name="Dante M."/>
            <person name="Pepin K."/>
            <person name="Hillier L.W."/>
            <person name="Nelson J."/>
            <person name="Spieth J."/>
            <person name="Ryan E."/>
            <person name="Andrews S."/>
            <person name="Geisel C."/>
            <person name="Layman D."/>
            <person name="Du H."/>
            <person name="Ali J."/>
            <person name="Berghoff A."/>
            <person name="Jones K."/>
            <person name="Drone K."/>
            <person name="Cotton M."/>
            <person name="Joshu C."/>
            <person name="Antonoiu B."/>
            <person name="Zidanic M."/>
            <person name="Strong C."/>
            <person name="Sun H."/>
            <person name="Lamar B."/>
            <person name="Yordan C."/>
            <person name="Ma P."/>
            <person name="Zhong J."/>
            <person name="Preston R."/>
            <person name="Vil D."/>
            <person name="Shekher M."/>
            <person name="Matero A."/>
            <person name="Shah R."/>
            <person name="Swaby I.K."/>
            <person name="O'Shaughnessy A."/>
            <person name="Rodriguez M."/>
            <person name="Hoffman J."/>
            <person name="Till S."/>
            <person name="Granat S."/>
            <person name="Shohdy N."/>
            <person name="Hasegawa A."/>
            <person name="Hameed A."/>
            <person name="Lodhi M."/>
            <person name="Johnson A."/>
            <person name="Chen E."/>
            <person name="Marra M.A."/>
            <person name="Martienssen R."/>
            <person name="McCombie W.R."/>
        </authorList>
    </citation>
    <scope>NUCLEOTIDE SEQUENCE [LARGE SCALE GENOMIC DNA]</scope>
    <source>
        <strain>cv. Columbia</strain>
    </source>
</reference>
<reference key="2">
    <citation type="journal article" date="2017" name="Plant J.">
        <title>Araport11: a complete reannotation of the Arabidopsis thaliana reference genome.</title>
        <authorList>
            <person name="Cheng C.Y."/>
            <person name="Krishnakumar V."/>
            <person name="Chan A.P."/>
            <person name="Thibaud-Nissen F."/>
            <person name="Schobel S."/>
            <person name="Town C.D."/>
        </authorList>
    </citation>
    <scope>GENOME REANNOTATION</scope>
    <source>
        <strain>cv. Columbia</strain>
    </source>
</reference>
<reference key="3">
    <citation type="journal article" date="2003" name="Science">
        <title>Empirical analysis of transcriptional activity in the Arabidopsis genome.</title>
        <authorList>
            <person name="Yamada K."/>
            <person name="Lim J."/>
            <person name="Dale J.M."/>
            <person name="Chen H."/>
            <person name="Shinn P."/>
            <person name="Palm C.J."/>
            <person name="Southwick A.M."/>
            <person name="Wu H.C."/>
            <person name="Kim C.J."/>
            <person name="Nguyen M."/>
            <person name="Pham P.K."/>
            <person name="Cheuk R.F."/>
            <person name="Karlin-Newmann G."/>
            <person name="Liu S.X."/>
            <person name="Lam B."/>
            <person name="Sakano H."/>
            <person name="Wu T."/>
            <person name="Yu G."/>
            <person name="Miranda M."/>
            <person name="Quach H.L."/>
            <person name="Tripp M."/>
            <person name="Chang C.H."/>
            <person name="Lee J.M."/>
            <person name="Toriumi M.J."/>
            <person name="Chan M.M."/>
            <person name="Tang C.C."/>
            <person name="Onodera C.S."/>
            <person name="Deng J.M."/>
            <person name="Akiyama K."/>
            <person name="Ansari Y."/>
            <person name="Arakawa T."/>
            <person name="Banh J."/>
            <person name="Banno F."/>
            <person name="Bowser L."/>
            <person name="Brooks S.Y."/>
            <person name="Carninci P."/>
            <person name="Chao Q."/>
            <person name="Choy N."/>
            <person name="Enju A."/>
            <person name="Goldsmith A.D."/>
            <person name="Gurjal M."/>
            <person name="Hansen N.F."/>
            <person name="Hayashizaki Y."/>
            <person name="Johnson-Hopson C."/>
            <person name="Hsuan V.W."/>
            <person name="Iida K."/>
            <person name="Karnes M."/>
            <person name="Khan S."/>
            <person name="Koesema E."/>
            <person name="Ishida J."/>
            <person name="Jiang P.X."/>
            <person name="Jones T."/>
            <person name="Kawai J."/>
            <person name="Kamiya A."/>
            <person name="Meyers C."/>
            <person name="Nakajima M."/>
            <person name="Narusaka M."/>
            <person name="Seki M."/>
            <person name="Sakurai T."/>
            <person name="Satou M."/>
            <person name="Tamse R."/>
            <person name="Vaysberg M."/>
            <person name="Wallender E.K."/>
            <person name="Wong C."/>
            <person name="Yamamura Y."/>
            <person name="Yuan S."/>
            <person name="Shinozaki K."/>
            <person name="Davis R.W."/>
            <person name="Theologis A."/>
            <person name="Ecker J.R."/>
        </authorList>
    </citation>
    <scope>NUCLEOTIDE SEQUENCE [LARGE SCALE MRNA] (ISOFORM 1)</scope>
    <source>
        <strain>cv. Columbia</strain>
    </source>
</reference>
<reference key="4">
    <citation type="submission" date="2002-03" db="EMBL/GenBank/DDBJ databases">
        <title>Full-length cDNA from Arabidopsis thaliana.</title>
        <authorList>
            <person name="Brover V.V."/>
            <person name="Troukhan M.E."/>
            <person name="Alexandrov N.A."/>
            <person name="Lu Y.-P."/>
            <person name="Flavell R.B."/>
            <person name="Feldmann K.A."/>
        </authorList>
    </citation>
    <scope>NUCLEOTIDE SEQUENCE [LARGE SCALE MRNA] (ISOFORM 1)</scope>
</reference>
<reference key="5">
    <citation type="journal article" date="2006" name="Photosyn. Res.">
        <title>Plant methionine sulfoxide reductase A and B multigenic families.</title>
        <authorList>
            <person name="Rouhier N."/>
            <person name="Vieira Dos Santos C."/>
            <person name="Tarrago L."/>
            <person name="Rey P."/>
        </authorList>
    </citation>
    <scope>GENE FAMILY</scope>
    <scope>NOMENCLATURE</scope>
</reference>